<organism>
    <name type="scientific">Gluconacetobacter diazotrophicus (strain ATCC 49037 / DSM 5601 / CCUG 37298 / CIP 103539 / LMG 7603 / PAl5)</name>
    <dbReference type="NCBI Taxonomy" id="272568"/>
    <lineage>
        <taxon>Bacteria</taxon>
        <taxon>Pseudomonadati</taxon>
        <taxon>Pseudomonadota</taxon>
        <taxon>Alphaproteobacteria</taxon>
        <taxon>Acetobacterales</taxon>
        <taxon>Acetobacteraceae</taxon>
        <taxon>Gluconacetobacter</taxon>
    </lineage>
</organism>
<keyword id="KW-0028">Amino-acid biosynthesis</keyword>
<keyword id="KW-0057">Aromatic amino acid biosynthesis</keyword>
<keyword id="KW-0456">Lyase</keyword>
<keyword id="KW-1185">Reference proteome</keyword>
<keyword id="KW-0822">Tryptophan biosynthesis</keyword>
<dbReference type="EC" id="4.2.1.20" evidence="1"/>
<dbReference type="EMBL" id="AM889285">
    <property type="protein sequence ID" value="CAP55197.1"/>
    <property type="molecule type" value="Genomic_DNA"/>
</dbReference>
<dbReference type="EMBL" id="CP001189">
    <property type="protein sequence ID" value="ACI51725.1"/>
    <property type="molecule type" value="Genomic_DNA"/>
</dbReference>
<dbReference type="RefSeq" id="WP_012224417.1">
    <property type="nucleotide sequence ID" value="NC_010125.1"/>
</dbReference>
<dbReference type="SMR" id="A9HE84"/>
<dbReference type="STRING" id="272568.GDI1254"/>
<dbReference type="KEGG" id="gdi:GDI1254"/>
<dbReference type="KEGG" id="gdj:Gdia_1965"/>
<dbReference type="eggNOG" id="COG0159">
    <property type="taxonomic scope" value="Bacteria"/>
</dbReference>
<dbReference type="HOGENOM" id="CLU_016734_0_0_5"/>
<dbReference type="OrthoDB" id="9804578at2"/>
<dbReference type="UniPathway" id="UPA00035">
    <property type="reaction ID" value="UER00044"/>
</dbReference>
<dbReference type="Proteomes" id="UP000001176">
    <property type="component" value="Chromosome"/>
</dbReference>
<dbReference type="GO" id="GO:0005829">
    <property type="term" value="C:cytosol"/>
    <property type="evidence" value="ECO:0007669"/>
    <property type="project" value="TreeGrafter"/>
</dbReference>
<dbReference type="GO" id="GO:0004834">
    <property type="term" value="F:tryptophan synthase activity"/>
    <property type="evidence" value="ECO:0007669"/>
    <property type="project" value="UniProtKB-UniRule"/>
</dbReference>
<dbReference type="CDD" id="cd04724">
    <property type="entry name" value="Tryptophan_synthase_alpha"/>
    <property type="match status" value="1"/>
</dbReference>
<dbReference type="FunFam" id="3.20.20.70:FF:000037">
    <property type="entry name" value="Tryptophan synthase alpha chain"/>
    <property type="match status" value="1"/>
</dbReference>
<dbReference type="Gene3D" id="3.20.20.70">
    <property type="entry name" value="Aldolase class I"/>
    <property type="match status" value="1"/>
</dbReference>
<dbReference type="HAMAP" id="MF_00131">
    <property type="entry name" value="Trp_synth_alpha"/>
    <property type="match status" value="1"/>
</dbReference>
<dbReference type="InterPro" id="IPR013785">
    <property type="entry name" value="Aldolase_TIM"/>
</dbReference>
<dbReference type="InterPro" id="IPR011060">
    <property type="entry name" value="RibuloseP-bd_barrel"/>
</dbReference>
<dbReference type="InterPro" id="IPR002028">
    <property type="entry name" value="Trp_synthase_suA"/>
</dbReference>
<dbReference type="NCBIfam" id="TIGR00262">
    <property type="entry name" value="trpA"/>
    <property type="match status" value="1"/>
</dbReference>
<dbReference type="PANTHER" id="PTHR43406:SF1">
    <property type="entry name" value="TRYPTOPHAN SYNTHASE ALPHA CHAIN, CHLOROPLASTIC"/>
    <property type="match status" value="1"/>
</dbReference>
<dbReference type="PANTHER" id="PTHR43406">
    <property type="entry name" value="TRYPTOPHAN SYNTHASE, ALPHA CHAIN"/>
    <property type="match status" value="1"/>
</dbReference>
<dbReference type="Pfam" id="PF00290">
    <property type="entry name" value="Trp_syntA"/>
    <property type="match status" value="1"/>
</dbReference>
<dbReference type="SUPFAM" id="SSF51366">
    <property type="entry name" value="Ribulose-phoshate binding barrel"/>
    <property type="match status" value="1"/>
</dbReference>
<reference key="1">
    <citation type="journal article" date="2009" name="BMC Genomics">
        <title>Complete genome sequence of the sugarcane nitrogen-fixing endophyte Gluconacetobacter diazotrophicus Pal5.</title>
        <authorList>
            <person name="Bertalan M."/>
            <person name="Albano R."/>
            <person name="de Padua V."/>
            <person name="Rouws L."/>
            <person name="Rojas C."/>
            <person name="Hemerly A."/>
            <person name="Teixeira K."/>
            <person name="Schwab S."/>
            <person name="Araujo J."/>
            <person name="Oliveira A."/>
            <person name="Franca L."/>
            <person name="Magalhaes V."/>
            <person name="Alqueres S."/>
            <person name="Cardoso A."/>
            <person name="Almeida W."/>
            <person name="Loureiro M.M."/>
            <person name="Nogueira E."/>
            <person name="Cidade D."/>
            <person name="Oliveira D."/>
            <person name="Simao T."/>
            <person name="Macedo J."/>
            <person name="Valadao A."/>
            <person name="Dreschsel M."/>
            <person name="Freitas F."/>
            <person name="Vidal M."/>
            <person name="Guedes H."/>
            <person name="Rodrigues E."/>
            <person name="Meneses C."/>
            <person name="Brioso P."/>
            <person name="Pozzer L."/>
            <person name="Figueiredo D."/>
            <person name="Montano H."/>
            <person name="Junior J."/>
            <person name="de Souza Filho G."/>
            <person name="Martin Quintana Flores V."/>
            <person name="Ferreira B."/>
            <person name="Branco A."/>
            <person name="Gonzalez P."/>
            <person name="Guillobel H."/>
            <person name="Lemos M."/>
            <person name="Seibel L."/>
            <person name="Macedo J."/>
            <person name="Alves-Ferreira M."/>
            <person name="Sachetto-Martins G."/>
            <person name="Coelho A."/>
            <person name="Santos E."/>
            <person name="Amaral G."/>
            <person name="Neves A."/>
            <person name="Pacheco A.B."/>
            <person name="Carvalho D."/>
            <person name="Lery L."/>
            <person name="Bisch P."/>
            <person name="Rossle S.C."/>
            <person name="Urmenyi T."/>
            <person name="Rael Pereira A."/>
            <person name="Silva R."/>
            <person name="Rondinelli E."/>
            <person name="von Kruger W."/>
            <person name="Martins O."/>
            <person name="Baldani J.I."/>
            <person name="Ferreira P.C."/>
        </authorList>
    </citation>
    <scope>NUCLEOTIDE SEQUENCE [LARGE SCALE GENOMIC DNA]</scope>
    <source>
        <strain>ATCC 49037 / DSM 5601 / CCUG 37298 / CIP 103539 / LMG 7603 / PAl5</strain>
    </source>
</reference>
<reference key="2">
    <citation type="journal article" date="2010" name="Stand. Genomic Sci.">
        <title>Two genome sequences of the same bacterial strain, Gluconacetobacter diazotrophicus PAl 5, suggest a new standard in genome sequence submission.</title>
        <authorList>
            <person name="Giongo A."/>
            <person name="Tyler H.L."/>
            <person name="Zipperer U.N."/>
            <person name="Triplett E.W."/>
        </authorList>
    </citation>
    <scope>NUCLEOTIDE SEQUENCE [LARGE SCALE GENOMIC DNA]</scope>
    <source>
        <strain>ATCC 49037 / DSM 5601 / CCUG 37298 / CIP 103539 / LMG 7603 / PAl5</strain>
    </source>
</reference>
<evidence type="ECO:0000255" key="1">
    <source>
        <dbReference type="HAMAP-Rule" id="MF_00131"/>
    </source>
</evidence>
<name>TRPA_GLUDA</name>
<comment type="function">
    <text evidence="1">The alpha subunit is responsible for the aldol cleavage of indoleglycerol phosphate to indole and glyceraldehyde 3-phosphate.</text>
</comment>
<comment type="catalytic activity">
    <reaction evidence="1">
        <text>(1S,2R)-1-C-(indol-3-yl)glycerol 3-phosphate + L-serine = D-glyceraldehyde 3-phosphate + L-tryptophan + H2O</text>
        <dbReference type="Rhea" id="RHEA:10532"/>
        <dbReference type="ChEBI" id="CHEBI:15377"/>
        <dbReference type="ChEBI" id="CHEBI:33384"/>
        <dbReference type="ChEBI" id="CHEBI:57912"/>
        <dbReference type="ChEBI" id="CHEBI:58866"/>
        <dbReference type="ChEBI" id="CHEBI:59776"/>
        <dbReference type="EC" id="4.2.1.20"/>
    </reaction>
</comment>
<comment type="pathway">
    <text evidence="1">Amino-acid biosynthesis; L-tryptophan biosynthesis; L-tryptophan from chorismate: step 5/5.</text>
</comment>
<comment type="subunit">
    <text evidence="1">Tetramer of two alpha and two beta chains.</text>
</comment>
<comment type="similarity">
    <text evidence="1">Belongs to the TrpA family.</text>
</comment>
<proteinExistence type="inferred from homology"/>
<sequence length="274" mass="28638">MSRIARRFAALKAQDRGALIPYLQACDPDYETSLALLRAMPGAGADLIEIGVPFSDPSADGPTIQAAARRGLAAGATMARVLEMVTRFREGDADTPIVLMGYLNPIEAYGPARFCADAARAGVDGLIVVDLPPEEADLLEGPAADHGLDIIRLVAPTTDDTRLPLVCRHASGFIYYVSITGVTGTRTASADELAQALPRLRAATDLPVAIGFGIRTPEQAAAAVRVADAAVVASALIATLEDSLDAEGRAGPDTLKRVLAQLEALGRAVRNART</sequence>
<gene>
    <name evidence="1" type="primary">trpA</name>
    <name type="ordered locus">GDI1254</name>
    <name type="ordered locus">Gdia_1965</name>
</gene>
<accession>A9HE84</accession>
<accession>B5ZCR7</accession>
<feature type="chain" id="PRO_1000076357" description="Tryptophan synthase alpha chain">
    <location>
        <begin position="1"/>
        <end position="274"/>
    </location>
</feature>
<feature type="active site" description="Proton acceptor" evidence="1">
    <location>
        <position position="49"/>
    </location>
</feature>
<feature type="active site" description="Proton acceptor" evidence="1">
    <location>
        <position position="60"/>
    </location>
</feature>
<protein>
    <recommendedName>
        <fullName evidence="1">Tryptophan synthase alpha chain</fullName>
        <ecNumber evidence="1">4.2.1.20</ecNumber>
    </recommendedName>
</protein>